<evidence type="ECO:0000255" key="1"/>
<evidence type="ECO:0000256" key="2">
    <source>
        <dbReference type="SAM" id="MobiDB-lite"/>
    </source>
</evidence>
<evidence type="ECO:0000305" key="3"/>
<organism>
    <name type="scientific">Human cytomegalovirus (strain Towne)</name>
    <name type="common">HHV-5</name>
    <name type="synonym">Human herpesvirus 5</name>
    <dbReference type="NCBI Taxonomy" id="10363"/>
    <lineage>
        <taxon>Viruses</taxon>
        <taxon>Duplodnaviria</taxon>
        <taxon>Heunggongvirae</taxon>
        <taxon>Peploviricota</taxon>
        <taxon>Herviviricetes</taxon>
        <taxon>Herpesvirales</taxon>
        <taxon>Orthoherpesviridae</taxon>
        <taxon>Betaherpesvirinae</taxon>
        <taxon>Cytomegalovirus</taxon>
        <taxon>Cytomegalovirus humanbeta5</taxon>
        <taxon>Human cytomegalovirus</taxon>
    </lineage>
</organism>
<accession>Q03307</accession>
<keyword id="KW-0325">Glycoprotein</keyword>
<keyword id="KW-0426">Late protein</keyword>
<keyword id="KW-0472">Membrane</keyword>
<keyword id="KW-0812">Transmembrane</keyword>
<keyword id="KW-1133">Transmembrane helix</keyword>
<proteinExistence type="evidence at transcript level"/>
<reference key="1">
    <citation type="journal article" date="1993" name="J. Virol.">
        <title>Characterization of a structurally tricistronic gene of human cytomegalovirus composed of U(s)18, U(s)19, and U(s)20.</title>
        <authorList>
            <person name="Guo Y.-W."/>
            <person name="Huang E.S."/>
        </authorList>
    </citation>
    <scope>NUCLEOTIDE SEQUENCE [GENOMIC DNA]</scope>
</reference>
<name>US20_HCMVT</name>
<comment type="subcellular location">
    <subcellularLocation>
        <location evidence="3">Membrane</location>
        <topology evidence="3">Multi-pass membrane protein</topology>
    </subcellularLocation>
</comment>
<comment type="developmental stage">
    <text>Expressed 18 hours post-infection. A second initiation codon (Met-89) is probably used at 34 hours post-infection.</text>
</comment>
<comment type="similarity">
    <text evidence="3">Belongs to the cytomegalovirus US12 family.</text>
</comment>
<sequence>MRVISRARSACTWTSCTSLSPCSTSCPPSPAAPTLLRRRSLPQQRRRPSSSPNRRVRGVTTSPCPTRSLVYKRRVGAPQRLCAETVATMQAQEANALLLSRMEALEWFKKFTVWLRVYAIFIFQLAFSFGLGSVFWLGFPQNRNFCVENYSFFLTVLVPIVCMFITYTLGNEHPSNATVLFIYLLANSLTAAIFQMCSESRVLVGSYVMTLALFISFTGLAFLGGRDRRRWKCISCVYVVMLLSFLTLALLSDADWLQKIVVTLCAFSISFFLGILAYDSLMVIFFCPPNQCIRHAVCLYLDSMAIFLTLLLMLSGPRWISLSDGVPLDNGTLTAASTTGKS</sequence>
<dbReference type="EMBL" id="L04998">
    <property type="protein sequence ID" value="AAA45989.1"/>
    <property type="molecule type" value="Genomic_DNA"/>
</dbReference>
<dbReference type="PIR" id="A45678">
    <property type="entry name" value="A45678"/>
</dbReference>
<dbReference type="SMR" id="Q03307"/>
<dbReference type="TCDB" id="1.A.14.4.1">
    <property type="family name" value="the calcium transporter a (cata) family (formerly the testis-enhanced gene transfer (tegt) family)"/>
</dbReference>
<dbReference type="GlyCosmos" id="Q03307">
    <property type="glycosylation" value="3 sites, No reported glycans"/>
</dbReference>
<dbReference type="GO" id="GO:0016020">
    <property type="term" value="C:membrane"/>
    <property type="evidence" value="ECO:0007669"/>
    <property type="project" value="UniProtKB-SubCell"/>
</dbReference>
<dbReference type="InterPro" id="IPR006214">
    <property type="entry name" value="Bax_inhibitor_1-related"/>
</dbReference>
<dbReference type="PANTHER" id="PTHR23291">
    <property type="entry name" value="BAX INHIBITOR-RELATED"/>
    <property type="match status" value="1"/>
</dbReference>
<dbReference type="PANTHER" id="PTHR23291:SF50">
    <property type="entry name" value="PROTEIN LIFEGUARD 4"/>
    <property type="match status" value="1"/>
</dbReference>
<dbReference type="Pfam" id="PF01027">
    <property type="entry name" value="Bax1-I"/>
    <property type="match status" value="1"/>
</dbReference>
<protein>
    <recommendedName>
        <fullName>Transmembrane protein HWLF3</fullName>
    </recommendedName>
</protein>
<gene>
    <name type="primary">US20</name>
</gene>
<feature type="chain" id="PRO_0000115282" description="Transmembrane protein HWLF3">
    <location>
        <begin position="1"/>
        <end position="342"/>
    </location>
</feature>
<feature type="transmembrane region" description="Helical" evidence="1">
    <location>
        <begin position="119"/>
        <end position="139"/>
    </location>
</feature>
<feature type="transmembrane region" description="Helical" evidence="1">
    <location>
        <begin position="150"/>
        <end position="170"/>
    </location>
</feature>
<feature type="transmembrane region" description="Helical" evidence="1">
    <location>
        <begin position="177"/>
        <end position="197"/>
    </location>
</feature>
<feature type="transmembrane region" description="Helical" evidence="1">
    <location>
        <begin position="202"/>
        <end position="222"/>
    </location>
</feature>
<feature type="transmembrane region" description="Helical" evidence="1">
    <location>
        <begin position="231"/>
        <end position="251"/>
    </location>
</feature>
<feature type="transmembrane region" description="Helical" evidence="1">
    <location>
        <begin position="266"/>
        <end position="286"/>
    </location>
</feature>
<feature type="transmembrane region" description="Helical" evidence="1">
    <location>
        <begin position="296"/>
        <end position="316"/>
    </location>
</feature>
<feature type="region of interest" description="Disordered" evidence="2">
    <location>
        <begin position="21"/>
        <end position="64"/>
    </location>
</feature>
<feature type="compositionally biased region" description="Basic residues" evidence="2">
    <location>
        <begin position="36"/>
        <end position="48"/>
    </location>
</feature>
<feature type="glycosylation site" description="N-linked (GlcNAc...) asparagine; by host" evidence="1">
    <location>
        <position position="149"/>
    </location>
</feature>
<feature type="glycosylation site" description="N-linked (GlcNAc...) asparagine; by host" evidence="1">
    <location>
        <position position="176"/>
    </location>
</feature>
<feature type="glycosylation site" description="N-linked (GlcNAc...) asparagine; by host" evidence="1">
    <location>
        <position position="330"/>
    </location>
</feature>
<organismHost>
    <name type="scientific">Homo sapiens</name>
    <name type="common">Human</name>
    <dbReference type="NCBI Taxonomy" id="9606"/>
</organismHost>